<sequence>MAVITMKSLLEAGVHFGHQVKRLDPRMKRFIFSERNEIHILDLQKTLQGIKDSYELVQSVIKNGKKVLFVGTKKQASEIIEQEAKRSEMPYVNNRWLGGMLSNFNTIKKSVQKLKKLEKMEVDGTFEMISKKEVSQINREKLKLAKNLTGIKDMEELPGAIFIIDPKREQIVINEARKLGIPIIAVVDTNCNPDVIDCPIPGNDDAIRSVALFTKIISDAILESDKEVGIQIVENLNEEDLMSEIEVKNERKES</sequence>
<gene>
    <name evidence="1" type="primary">rpsB</name>
    <name type="ordered locus">BDU_126</name>
</gene>
<protein>
    <recommendedName>
        <fullName evidence="1">Small ribosomal subunit protein uS2</fullName>
    </recommendedName>
    <alternativeName>
        <fullName evidence="2">30S ribosomal protein S2</fullName>
    </alternativeName>
</protein>
<feature type="chain" id="PRO_1000114993" description="Small ribosomal subunit protein uS2">
    <location>
        <begin position="1"/>
        <end position="254"/>
    </location>
</feature>
<name>RS2_BORDL</name>
<organism>
    <name type="scientific">Borrelia duttonii (strain Ly)</name>
    <dbReference type="NCBI Taxonomy" id="412419"/>
    <lineage>
        <taxon>Bacteria</taxon>
        <taxon>Pseudomonadati</taxon>
        <taxon>Spirochaetota</taxon>
        <taxon>Spirochaetia</taxon>
        <taxon>Spirochaetales</taxon>
        <taxon>Borreliaceae</taxon>
        <taxon>Borrelia</taxon>
    </lineage>
</organism>
<keyword id="KW-0687">Ribonucleoprotein</keyword>
<keyword id="KW-0689">Ribosomal protein</keyword>
<reference key="1">
    <citation type="journal article" date="2008" name="PLoS Genet.">
        <title>The genome of Borrelia recurrentis, the agent of deadly louse-borne relapsing fever, is a degraded subset of tick-borne Borrelia duttonii.</title>
        <authorList>
            <person name="Lescot M."/>
            <person name="Audic S."/>
            <person name="Robert C."/>
            <person name="Nguyen T.T."/>
            <person name="Blanc G."/>
            <person name="Cutler S.J."/>
            <person name="Wincker P."/>
            <person name="Couloux A."/>
            <person name="Claverie J.-M."/>
            <person name="Raoult D."/>
            <person name="Drancourt M."/>
        </authorList>
    </citation>
    <scope>NUCLEOTIDE SEQUENCE [LARGE SCALE GENOMIC DNA]</scope>
    <source>
        <strain>Ly</strain>
    </source>
</reference>
<accession>B5RLJ7</accession>
<evidence type="ECO:0000255" key="1">
    <source>
        <dbReference type="HAMAP-Rule" id="MF_00291"/>
    </source>
</evidence>
<evidence type="ECO:0000305" key="2"/>
<proteinExistence type="inferred from homology"/>
<dbReference type="EMBL" id="CP000976">
    <property type="protein sequence ID" value="ACH93082.1"/>
    <property type="molecule type" value="Genomic_DNA"/>
</dbReference>
<dbReference type="RefSeq" id="WP_012537894.1">
    <property type="nucleotide sequence ID" value="NC_011229.1"/>
</dbReference>
<dbReference type="SMR" id="B5RLJ7"/>
<dbReference type="STRING" id="412419.BDU_126"/>
<dbReference type="KEGG" id="bdu:BDU_126"/>
<dbReference type="eggNOG" id="COG0052">
    <property type="taxonomic scope" value="Bacteria"/>
</dbReference>
<dbReference type="HOGENOM" id="CLU_040318_1_3_12"/>
<dbReference type="OrthoDB" id="9808036at2"/>
<dbReference type="Proteomes" id="UP000000611">
    <property type="component" value="Chromosome"/>
</dbReference>
<dbReference type="GO" id="GO:0022627">
    <property type="term" value="C:cytosolic small ribosomal subunit"/>
    <property type="evidence" value="ECO:0007669"/>
    <property type="project" value="TreeGrafter"/>
</dbReference>
<dbReference type="GO" id="GO:0003735">
    <property type="term" value="F:structural constituent of ribosome"/>
    <property type="evidence" value="ECO:0007669"/>
    <property type="project" value="InterPro"/>
</dbReference>
<dbReference type="GO" id="GO:0006412">
    <property type="term" value="P:translation"/>
    <property type="evidence" value="ECO:0007669"/>
    <property type="project" value="UniProtKB-UniRule"/>
</dbReference>
<dbReference type="CDD" id="cd01425">
    <property type="entry name" value="RPS2"/>
    <property type="match status" value="1"/>
</dbReference>
<dbReference type="FunFam" id="1.10.287.610:FF:000001">
    <property type="entry name" value="30S ribosomal protein S2"/>
    <property type="match status" value="1"/>
</dbReference>
<dbReference type="Gene3D" id="3.40.50.10490">
    <property type="entry name" value="Glucose-6-phosphate isomerase like protein, domain 1"/>
    <property type="match status" value="1"/>
</dbReference>
<dbReference type="Gene3D" id="1.10.287.610">
    <property type="entry name" value="Helix hairpin bin"/>
    <property type="match status" value="1"/>
</dbReference>
<dbReference type="HAMAP" id="MF_00291_B">
    <property type="entry name" value="Ribosomal_uS2_B"/>
    <property type="match status" value="1"/>
</dbReference>
<dbReference type="InterPro" id="IPR001865">
    <property type="entry name" value="Ribosomal_uS2"/>
</dbReference>
<dbReference type="InterPro" id="IPR005706">
    <property type="entry name" value="Ribosomal_uS2_bac/mit/plastid"/>
</dbReference>
<dbReference type="InterPro" id="IPR018130">
    <property type="entry name" value="Ribosomal_uS2_CS"/>
</dbReference>
<dbReference type="InterPro" id="IPR023591">
    <property type="entry name" value="Ribosomal_uS2_flav_dom_sf"/>
</dbReference>
<dbReference type="NCBIfam" id="TIGR01011">
    <property type="entry name" value="rpsB_bact"/>
    <property type="match status" value="1"/>
</dbReference>
<dbReference type="PANTHER" id="PTHR12534">
    <property type="entry name" value="30S RIBOSOMAL PROTEIN S2 PROKARYOTIC AND ORGANELLAR"/>
    <property type="match status" value="1"/>
</dbReference>
<dbReference type="PANTHER" id="PTHR12534:SF0">
    <property type="entry name" value="SMALL RIBOSOMAL SUBUNIT PROTEIN US2M"/>
    <property type="match status" value="1"/>
</dbReference>
<dbReference type="Pfam" id="PF00318">
    <property type="entry name" value="Ribosomal_S2"/>
    <property type="match status" value="1"/>
</dbReference>
<dbReference type="PRINTS" id="PR00395">
    <property type="entry name" value="RIBOSOMALS2"/>
</dbReference>
<dbReference type="SUPFAM" id="SSF52313">
    <property type="entry name" value="Ribosomal protein S2"/>
    <property type="match status" value="1"/>
</dbReference>
<dbReference type="PROSITE" id="PS00962">
    <property type="entry name" value="RIBOSOMAL_S2_1"/>
    <property type="match status" value="1"/>
</dbReference>
<dbReference type="PROSITE" id="PS00963">
    <property type="entry name" value="RIBOSOMAL_S2_2"/>
    <property type="match status" value="1"/>
</dbReference>
<comment type="similarity">
    <text evidence="1">Belongs to the universal ribosomal protein uS2 family.</text>
</comment>